<comment type="subcellular location">
    <subcellularLocation>
        <location evidence="1">Cytoplasm</location>
    </subcellularLocation>
</comment>
<comment type="similarity">
    <text evidence="1">Belongs to the UPF0294 family.</text>
</comment>
<comment type="sequence caution" evidence="2">
    <conflict type="erroneous initiation">
        <sequence resource="EMBL-CDS" id="AAL19215"/>
    </conflict>
</comment>
<proteinExistence type="inferred from homology"/>
<organism>
    <name type="scientific">Salmonella typhimurium (strain LT2 / SGSC1412 / ATCC 700720)</name>
    <dbReference type="NCBI Taxonomy" id="99287"/>
    <lineage>
        <taxon>Bacteria</taxon>
        <taxon>Pseudomonadati</taxon>
        <taxon>Pseudomonadota</taxon>
        <taxon>Gammaproteobacteria</taxon>
        <taxon>Enterobacterales</taxon>
        <taxon>Enterobacteriaceae</taxon>
        <taxon>Salmonella</taxon>
    </lineage>
</organism>
<name>YAFD_SALTY</name>
<feature type="chain" id="PRO_0000074642" description="UPF0294 protein YafD">
    <location>
        <begin position="1"/>
        <end position="266"/>
    </location>
</feature>
<evidence type="ECO:0000255" key="1">
    <source>
        <dbReference type="HAMAP-Rule" id="MF_01119"/>
    </source>
</evidence>
<evidence type="ECO:0000305" key="2"/>
<dbReference type="EMBL" id="AE006468">
    <property type="protein sequence ID" value="AAL19215.1"/>
    <property type="status" value="ALT_INIT"/>
    <property type="molecule type" value="Genomic_DNA"/>
</dbReference>
<dbReference type="RefSeq" id="NP_459256.1">
    <property type="nucleotide sequence ID" value="NC_003197.2"/>
</dbReference>
<dbReference type="RefSeq" id="WP_001669808.1">
    <property type="nucleotide sequence ID" value="NC_003197.2"/>
</dbReference>
<dbReference type="SMR" id="Q8ZRM4"/>
<dbReference type="STRING" id="99287.STM0258"/>
<dbReference type="PaxDb" id="99287-STM0258"/>
<dbReference type="GeneID" id="1251776"/>
<dbReference type="KEGG" id="stm:STM0258"/>
<dbReference type="PATRIC" id="fig|99287.12.peg.267"/>
<dbReference type="HOGENOM" id="CLU_083563_0_0_6"/>
<dbReference type="PhylomeDB" id="Q8ZRM4"/>
<dbReference type="Proteomes" id="UP000001014">
    <property type="component" value="Chromosome"/>
</dbReference>
<dbReference type="GO" id="GO:0005737">
    <property type="term" value="C:cytoplasm"/>
    <property type="evidence" value="ECO:0007669"/>
    <property type="project" value="UniProtKB-SubCell"/>
</dbReference>
<dbReference type="GO" id="GO:0003824">
    <property type="term" value="F:catalytic activity"/>
    <property type="evidence" value="ECO:0007669"/>
    <property type="project" value="InterPro"/>
</dbReference>
<dbReference type="Gene3D" id="3.60.10.10">
    <property type="entry name" value="Endonuclease/exonuclease/phosphatase"/>
    <property type="match status" value="1"/>
</dbReference>
<dbReference type="HAMAP" id="MF_01119">
    <property type="entry name" value="UPF0294"/>
    <property type="match status" value="1"/>
</dbReference>
<dbReference type="InterPro" id="IPR036691">
    <property type="entry name" value="Endo/exonu/phosph_ase_sf"/>
</dbReference>
<dbReference type="InterPro" id="IPR005135">
    <property type="entry name" value="Endo/exonuclease/phosphatase"/>
</dbReference>
<dbReference type="InterPro" id="IPR022958">
    <property type="entry name" value="UPF0294"/>
</dbReference>
<dbReference type="NCBIfam" id="NF003839">
    <property type="entry name" value="PRK05421.1-1"/>
    <property type="match status" value="1"/>
</dbReference>
<dbReference type="NCBIfam" id="NF003840">
    <property type="entry name" value="PRK05421.1-2"/>
    <property type="match status" value="1"/>
</dbReference>
<dbReference type="NCBIfam" id="NF003841">
    <property type="entry name" value="PRK05421.1-3"/>
    <property type="match status" value="1"/>
</dbReference>
<dbReference type="NCBIfam" id="NF003842">
    <property type="entry name" value="PRK05421.1-4"/>
    <property type="match status" value="1"/>
</dbReference>
<dbReference type="Pfam" id="PF03372">
    <property type="entry name" value="Exo_endo_phos"/>
    <property type="match status" value="1"/>
</dbReference>
<dbReference type="SUPFAM" id="SSF56219">
    <property type="entry name" value="DNase I-like"/>
    <property type="match status" value="1"/>
</dbReference>
<accession>Q8ZRM4</accession>
<sequence length="266" mass="29931">MRKNTYAMRYVAGQPAERILPPGSFASIGQALPAGEPLSNEERIRILVWNIFKQQRAEWLSVLKNYGKDAHLVLLQEAQTTPELVQFATANYLAADQVPAFVLPQHPSGVMTLSAAHPVYCCPLREREPILRLAKSALVTVYPLPDTRLLMVVNVHAVNFSLGVDVYSKQLLPIGDQIAHHSGPVIMAGDFNAWSRPRMNALYRFAREMSLRQVRFTDDQRRRAFGRPLDFVFYRGLNVNEASVLVTRASDHNPLLVEFSPGKPEQ</sequence>
<reference key="1">
    <citation type="journal article" date="2001" name="Nature">
        <title>Complete genome sequence of Salmonella enterica serovar Typhimurium LT2.</title>
        <authorList>
            <person name="McClelland M."/>
            <person name="Sanderson K.E."/>
            <person name="Spieth J."/>
            <person name="Clifton S.W."/>
            <person name="Latreille P."/>
            <person name="Courtney L."/>
            <person name="Porwollik S."/>
            <person name="Ali J."/>
            <person name="Dante M."/>
            <person name="Du F."/>
            <person name="Hou S."/>
            <person name="Layman D."/>
            <person name="Leonard S."/>
            <person name="Nguyen C."/>
            <person name="Scott K."/>
            <person name="Holmes A."/>
            <person name="Grewal N."/>
            <person name="Mulvaney E."/>
            <person name="Ryan E."/>
            <person name="Sun H."/>
            <person name="Florea L."/>
            <person name="Miller W."/>
            <person name="Stoneking T."/>
            <person name="Nhan M."/>
            <person name="Waterston R."/>
            <person name="Wilson R.K."/>
        </authorList>
    </citation>
    <scope>NUCLEOTIDE SEQUENCE [LARGE SCALE GENOMIC DNA]</scope>
    <source>
        <strain>LT2 / SGSC1412 / ATCC 700720</strain>
    </source>
</reference>
<keyword id="KW-0963">Cytoplasm</keyword>
<keyword id="KW-1185">Reference proteome</keyword>
<protein>
    <recommendedName>
        <fullName evidence="1">UPF0294 protein YafD</fullName>
    </recommendedName>
</protein>
<gene>
    <name evidence="1" type="primary">yafD</name>
    <name type="ordered locus">STM0258</name>
</gene>